<proteinExistence type="evidence at protein level"/>
<keyword id="KW-0002">3D-structure</keyword>
<keyword id="KW-1003">Cell membrane</keyword>
<keyword id="KW-0868">Chloride</keyword>
<keyword id="KW-0157">Chromophore</keyword>
<keyword id="KW-0903">Direct protein sequencing</keyword>
<keyword id="KW-0406">Ion transport</keyword>
<keyword id="KW-0472">Membrane</keyword>
<keyword id="KW-0600">Photoreceptor protein</keyword>
<keyword id="KW-0675">Receptor</keyword>
<keyword id="KW-0681">Retinal protein</keyword>
<keyword id="KW-0716">Sensory transduction</keyword>
<keyword id="KW-0812">Transmembrane</keyword>
<keyword id="KW-1133">Transmembrane helix</keyword>
<keyword id="KW-0813">Transport</keyword>
<protein>
    <recommendedName>
        <fullName>Halorhodopsin</fullName>
        <shortName>HR</shortName>
    </recommendedName>
</protein>
<organism>
    <name type="scientific">Halobacterium salinarum (strain ATCC 29341 / DSM 671 / R1)</name>
    <dbReference type="NCBI Taxonomy" id="478009"/>
    <lineage>
        <taxon>Archaea</taxon>
        <taxon>Methanobacteriati</taxon>
        <taxon>Methanobacteriota</taxon>
        <taxon>Stenosarchaea group</taxon>
        <taxon>Halobacteria</taxon>
        <taxon>Halobacteriales</taxon>
        <taxon>Halobacteriaceae</taxon>
        <taxon>Halobacterium</taxon>
        <taxon>Halobacterium salinarum NRC-34001</taxon>
    </lineage>
</organism>
<name>BACH_HALS3</name>
<comment type="function">
    <text evidence="3">Light-driven chloride pump.</text>
</comment>
<comment type="biophysicochemical properties">
    <absorption>
        <max evidence="3">578 nm</max>
    </absorption>
</comment>
<comment type="subunit">
    <text evidence="1 2">Homotrimer.</text>
</comment>
<comment type="subcellular location">
    <subcellularLocation>
        <location evidence="1 3">Cell membrane</location>
        <topology evidence="1 3">Multi-pass membrane protein</topology>
    </subcellularLocation>
</comment>
<comment type="similarity">
    <text evidence="4">Belongs to the archaeal/bacterial/fungal opsin family.</text>
</comment>
<evidence type="ECO:0000269" key="1">
    <source>
    </source>
</evidence>
<evidence type="ECO:0000269" key="2">
    <source>
    </source>
</evidence>
<evidence type="ECO:0000269" key="3">
    <source>
    </source>
</evidence>
<evidence type="ECO:0000305" key="4"/>
<evidence type="ECO:0007829" key="5">
    <source>
        <dbReference type="PDB" id="2JAF"/>
    </source>
</evidence>
<sequence>MSITSVPGVVDAGVLGAQSAAAVRENALLSSSLWVNVALAGIAILVFVYMGRTIRPGRPRLIWGATLMIPLVSISSYLGLLSGLTVGMIEMPAGHALAGEMVRSQWGRYLTWALSTPMILLALGLLADVDLGSLFTVIAADIGMCVTGLAAAMTTSALLFRWAFYAISCAFFVVVLSALVTDWAASASSAGTAEIFDTLRVLTVVLWLGYPIVWAVGVEGLALVQSVGVTSWAYSVLDVFAKYVFAFILLRWVANNERTVAVAGQTLGTMSSDD</sequence>
<feature type="propeptide" id="PRO_0000428923">
    <location>
        <begin position="1"/>
        <end position="21"/>
    </location>
</feature>
<feature type="chain" id="PRO_0000428924" description="Halorhodopsin">
    <location>
        <begin position="22"/>
        <end position="274"/>
    </location>
</feature>
<feature type="topological domain" description="Extracellular" evidence="1">
    <location>
        <begin position="22"/>
        <end position="25"/>
    </location>
</feature>
<feature type="transmembrane region" description="Helical; Name=Helix A">
    <location>
        <begin position="26"/>
        <end position="51"/>
    </location>
</feature>
<feature type="topological domain" description="Cytoplasmic" evidence="1">
    <location>
        <begin position="52"/>
        <end position="57"/>
    </location>
</feature>
<feature type="transmembrane region" description="Helical; Name=Helix B">
    <location>
        <begin position="58"/>
        <end position="81"/>
    </location>
</feature>
<feature type="topological domain" description="Extracellular" evidence="1">
    <location>
        <begin position="82"/>
        <end position="105"/>
    </location>
</feature>
<feature type="transmembrane region" description="Helical; Name=Helix C">
    <location>
        <begin position="106"/>
        <end position="127"/>
    </location>
</feature>
<feature type="topological domain" description="Cytoplasmic" evidence="1">
    <location>
        <begin position="128"/>
        <end position="130"/>
    </location>
</feature>
<feature type="transmembrane region" description="Helical; Name=Helix D">
    <location>
        <begin position="131"/>
        <end position="154"/>
    </location>
</feature>
<feature type="topological domain" description="Extracellular" evidence="1">
    <location>
        <begin position="155"/>
        <end position="157"/>
    </location>
</feature>
<feature type="transmembrane region" description="Helical; Name=Helix E">
    <location>
        <begin position="158"/>
        <end position="180"/>
    </location>
</feature>
<feature type="topological domain" description="Cytoplasmic" evidence="1">
    <location>
        <begin position="181"/>
        <end position="192"/>
    </location>
</feature>
<feature type="transmembrane region" description="Helical; Name=Helix F">
    <location>
        <begin position="193"/>
        <end position="216"/>
    </location>
</feature>
<feature type="topological domain" description="Extracellular" evidence="1">
    <location>
        <begin position="217"/>
        <end position="226"/>
    </location>
</feature>
<feature type="transmembrane region" description="Helical; Name=Helix G">
    <location>
        <begin position="227"/>
        <end position="255"/>
    </location>
</feature>
<feature type="topological domain" description="Cytoplasmic" evidence="1">
    <location>
        <begin position="256"/>
        <end position="274"/>
    </location>
</feature>
<feature type="binding site" evidence="1 2">
    <location>
        <position position="105"/>
    </location>
    <ligand>
        <name>chloride</name>
        <dbReference type="ChEBI" id="CHEBI:17996"/>
        <label>1</label>
    </ligand>
</feature>
<feature type="binding site" evidence="1 2">
    <location>
        <position position="111"/>
    </location>
    <ligand>
        <name>chloride</name>
        <dbReference type="ChEBI" id="CHEBI:17996"/>
        <label>2</label>
    </ligand>
</feature>
<feature type="binding site" evidence="1 2">
    <location>
        <position position="115"/>
    </location>
    <ligand>
        <name>chloride</name>
        <dbReference type="ChEBI" id="CHEBI:17996"/>
        <label>2</label>
    </ligand>
</feature>
<feature type="modified residue" description="N6-(retinylidene)lysine">
    <location>
        <position position="242"/>
    </location>
</feature>
<feature type="helix" evidence="5">
    <location>
        <begin position="27"/>
        <end position="50"/>
    </location>
</feature>
<feature type="turn" evidence="5">
    <location>
        <begin position="51"/>
        <end position="53"/>
    </location>
</feature>
<feature type="helix" evidence="5">
    <location>
        <begin position="58"/>
        <end position="81"/>
    </location>
</feature>
<feature type="turn" evidence="5">
    <location>
        <begin position="82"/>
        <end position="85"/>
    </location>
</feature>
<feature type="strand" evidence="5">
    <location>
        <begin position="87"/>
        <end position="90"/>
    </location>
</feature>
<feature type="turn" evidence="5">
    <location>
        <begin position="96"/>
        <end position="99"/>
    </location>
</feature>
<feature type="strand" evidence="5">
    <location>
        <begin position="100"/>
        <end position="104"/>
    </location>
</feature>
<feature type="helix" evidence="5">
    <location>
        <begin position="106"/>
        <end position="127"/>
    </location>
</feature>
<feature type="helix" evidence="5">
    <location>
        <begin position="131"/>
        <end position="153"/>
    </location>
</feature>
<feature type="helix" evidence="5">
    <location>
        <begin position="158"/>
        <end position="180"/>
    </location>
</feature>
<feature type="helix" evidence="5">
    <location>
        <begin position="182"/>
        <end position="189"/>
    </location>
</feature>
<feature type="helix" evidence="5">
    <location>
        <begin position="193"/>
        <end position="216"/>
    </location>
</feature>
<feature type="turn" evidence="5">
    <location>
        <begin position="218"/>
        <end position="221"/>
    </location>
</feature>
<feature type="helix" evidence="5">
    <location>
        <begin position="227"/>
        <end position="241"/>
    </location>
</feature>
<feature type="helix" evidence="5">
    <location>
        <begin position="243"/>
        <end position="255"/>
    </location>
</feature>
<feature type="helix" evidence="5">
    <location>
        <begin position="257"/>
        <end position="261"/>
    </location>
</feature>
<gene>
    <name type="primary">hop</name>
    <name type="ordered locus">OE_1299R</name>
</gene>
<accession>B0R2U4</accession>
<accession>P16102</accession>
<accession>Q9HSK9</accession>
<dbReference type="EMBL" id="X04777">
    <property type="protein sequence ID" value="CAB37866.1"/>
    <property type="molecule type" value="Genomic_DNA"/>
</dbReference>
<dbReference type="EMBL" id="AM774415">
    <property type="protein sequence ID" value="CAP13054.1"/>
    <property type="molecule type" value="Genomic_DNA"/>
</dbReference>
<dbReference type="PIR" id="A26161">
    <property type="entry name" value="A26161"/>
</dbReference>
<dbReference type="RefSeq" id="WP_010902090.1">
    <property type="nucleotide sequence ID" value="NC_010364.1"/>
</dbReference>
<dbReference type="PDB" id="1E12">
    <property type="method" value="X-ray"/>
    <property type="resolution" value="1.80 A"/>
    <property type="chains" value="A=22-274"/>
</dbReference>
<dbReference type="PDB" id="2JAF">
    <property type="method" value="X-ray"/>
    <property type="resolution" value="1.70 A"/>
    <property type="chains" value="A=1-274"/>
</dbReference>
<dbReference type="PDB" id="2JAG">
    <property type="method" value="X-ray"/>
    <property type="resolution" value="1.93 A"/>
    <property type="chains" value="A=1-274"/>
</dbReference>
<dbReference type="PDB" id="5AHY">
    <property type="method" value="X-ray"/>
    <property type="resolution" value="2.15 A"/>
    <property type="chains" value="A=20-274"/>
</dbReference>
<dbReference type="PDB" id="5AHZ">
    <property type="method" value="X-ray"/>
    <property type="resolution" value="2.45 A"/>
    <property type="chains" value="A=20-274"/>
</dbReference>
<dbReference type="PDB" id="5G36">
    <property type="method" value="X-ray"/>
    <property type="resolution" value="2.60 A"/>
    <property type="chains" value="A=20-274"/>
</dbReference>
<dbReference type="PDBsum" id="1E12"/>
<dbReference type="PDBsum" id="2JAF"/>
<dbReference type="PDBsum" id="2JAG"/>
<dbReference type="PDBsum" id="5AHY"/>
<dbReference type="PDBsum" id="5AHZ"/>
<dbReference type="PDBsum" id="5G36"/>
<dbReference type="SMR" id="B0R2U4"/>
<dbReference type="EnsemblBacteria" id="CAP13054">
    <property type="protein sequence ID" value="CAP13054"/>
    <property type="gene ID" value="OE_1299R"/>
</dbReference>
<dbReference type="GeneID" id="89348755"/>
<dbReference type="KEGG" id="hsl:OE_1299R"/>
<dbReference type="HOGENOM" id="CLU_054785_5_1_2"/>
<dbReference type="PhylomeDB" id="B0R2U4"/>
<dbReference type="EvolutionaryTrace" id="B0R2U4"/>
<dbReference type="Proteomes" id="UP000001321">
    <property type="component" value="Chromosome"/>
</dbReference>
<dbReference type="GO" id="GO:0005886">
    <property type="term" value="C:plasma membrane"/>
    <property type="evidence" value="ECO:0007669"/>
    <property type="project" value="UniProtKB-SubCell"/>
</dbReference>
<dbReference type="GO" id="GO:0005216">
    <property type="term" value="F:monoatomic ion channel activity"/>
    <property type="evidence" value="ECO:0007669"/>
    <property type="project" value="InterPro"/>
</dbReference>
<dbReference type="GO" id="GO:0009881">
    <property type="term" value="F:photoreceptor activity"/>
    <property type="evidence" value="ECO:0007669"/>
    <property type="project" value="UniProtKB-KW"/>
</dbReference>
<dbReference type="GO" id="GO:0007602">
    <property type="term" value="P:phototransduction"/>
    <property type="evidence" value="ECO:0007669"/>
    <property type="project" value="UniProtKB-KW"/>
</dbReference>
<dbReference type="CDD" id="cd15243">
    <property type="entry name" value="7tm_Halorhodopsin"/>
    <property type="match status" value="1"/>
</dbReference>
<dbReference type="Gene3D" id="1.20.1070.10">
    <property type="entry name" value="Rhodopsin 7-helix transmembrane proteins"/>
    <property type="match status" value="1"/>
</dbReference>
<dbReference type="InterPro" id="IPR001425">
    <property type="entry name" value="Arc/bac/fun_rhodopsins"/>
</dbReference>
<dbReference type="InterPro" id="IPR018229">
    <property type="entry name" value="Rhodopsin_retinal_BS"/>
</dbReference>
<dbReference type="PANTHER" id="PTHR28286">
    <property type="match status" value="1"/>
</dbReference>
<dbReference type="PANTHER" id="PTHR28286:SF2">
    <property type="entry name" value="BACTERIORHODOPSIN _OPSIN, NOPA (EUROFUNG)"/>
    <property type="match status" value="1"/>
</dbReference>
<dbReference type="Pfam" id="PF01036">
    <property type="entry name" value="Bac_rhodopsin"/>
    <property type="match status" value="1"/>
</dbReference>
<dbReference type="PRINTS" id="PR00251">
    <property type="entry name" value="BACTRLOPSIN"/>
</dbReference>
<dbReference type="SMART" id="SM01021">
    <property type="entry name" value="Bac_rhodopsin"/>
    <property type="match status" value="1"/>
</dbReference>
<dbReference type="SUPFAM" id="SSF81321">
    <property type="entry name" value="Family A G protein-coupled receptor-like"/>
    <property type="match status" value="1"/>
</dbReference>
<dbReference type="PROSITE" id="PS00950">
    <property type="entry name" value="BACTERIAL_OPSIN_1"/>
    <property type="match status" value="1"/>
</dbReference>
<dbReference type="PROSITE" id="PS00327">
    <property type="entry name" value="BACTERIAL_OPSIN_RET"/>
    <property type="match status" value="1"/>
</dbReference>
<reference key="1">
    <citation type="journal article" date="1987" name="EMBO J.">
        <title>The halo-opsin gene. II. Sequence, primary structure of halorhodopsin and comparison with bacteriorhodopsin.</title>
        <authorList>
            <person name="Blanck A."/>
            <person name="Oesterhelt D."/>
        </authorList>
    </citation>
    <scope>NUCLEOTIDE SEQUENCE [GENOMIC DNA]</scope>
    <scope>PARTIAL PROTEIN SEQUENCE</scope>
    <source>
        <strain>R1 / S9 / L33</strain>
    </source>
</reference>
<reference key="2">
    <citation type="journal article" date="2008" name="Genomics">
        <title>Evolution in the laboratory: the genome of Halobacterium salinarum strain R1 compared to that of strain NRC-1.</title>
        <authorList>
            <person name="Pfeiffer F."/>
            <person name="Schuster S.C."/>
            <person name="Broicher A."/>
            <person name="Falb M."/>
            <person name="Palm P."/>
            <person name="Rodewald K."/>
            <person name="Ruepp A."/>
            <person name="Soppa J."/>
            <person name="Tittor J."/>
            <person name="Oesterhelt D."/>
        </authorList>
    </citation>
    <scope>NUCLEOTIDE SEQUENCE [LARGE SCALE GENOMIC DNA]</scope>
    <source>
        <strain>ATCC 29341 / DSM 671 / R1</strain>
    </source>
</reference>
<reference key="3">
    <citation type="journal article" date="1984" name="Biochemistry">
        <title>The chromoprotein of halorhodopsin is the light-driven electrogenic chloride pump in halobacterium halobium.</title>
        <authorList>
            <person name="Barnberg E."/>
            <person name="Hegemann P."/>
            <person name="Oesterhelt D."/>
        </authorList>
    </citation>
    <scope>FUNCTION</scope>
    <scope>BIOPHYSICOCHEMICAL PROPERTIES</scope>
    <scope>SUBCELLULAR LOCATION</scope>
    <source>
        <strain>R1 / S9 / L33</strain>
    </source>
</reference>
<reference key="4">
    <citation type="journal article" date="2000" name="Science">
        <title>Structure of the light-driven chloride pump halorhodopsin at 1.8-A resolution.</title>
        <authorList>
            <person name="Kolbe M."/>
            <person name="Besir H."/>
            <person name="Essen L.-O."/>
            <person name="Oesterhelt D."/>
        </authorList>
    </citation>
    <scope>X-RAY CRYSTALLOGRAPHY (1.8 ANGSTROMS) OF 22-274 IN COMPLEX WITH CHLORIDE</scope>
    <scope>SUBUNIT</scope>
    <scope>SUBCELLULAR LOCATION</scope>
    <scope>TOPOLOGY</scope>
    <scope>RETINAL-BINDING SITE</scope>
    <source>
        <strain>R1 / S9 / D2</strain>
    </source>
</reference>
<reference key="5">
    <citation type="journal article" date="2007" name="Photochem. Photobiol.">
        <title>The crystal structure of the L1 intermediate of halorhodopsin at 1.9 angstroms resolution.</title>
        <authorList>
            <person name="Gmelin W."/>
            <person name="Zeth K."/>
            <person name="Efremov R."/>
            <person name="Heberle J."/>
            <person name="Tittor J."/>
            <person name="Oesterhelt D."/>
        </authorList>
    </citation>
    <scope>X-RAY CRYSTALLOGRAPHY (1.70 ANGSTROMS) IN COMPLEX WITH CHLORIDE</scope>
    <scope>RETINAL-BINDING SITE</scope>
    <source>
        <strain>R1 / S9 / D2</strain>
    </source>
</reference>